<proteinExistence type="inferred from homology"/>
<gene>
    <name evidence="1" type="primary">gcvT</name>
    <name type="ordered locus">LBJ_2730</name>
</gene>
<reference key="1">
    <citation type="journal article" date="2006" name="Proc. Natl. Acad. Sci. U.S.A.">
        <title>Genome reduction in Leptospira borgpetersenii reflects limited transmission potential.</title>
        <authorList>
            <person name="Bulach D.M."/>
            <person name="Zuerner R.L."/>
            <person name="Wilson P."/>
            <person name="Seemann T."/>
            <person name="McGrath A."/>
            <person name="Cullen P.A."/>
            <person name="Davis J."/>
            <person name="Johnson M."/>
            <person name="Kuczek E."/>
            <person name="Alt D.P."/>
            <person name="Peterson-Burch B."/>
            <person name="Coppel R.L."/>
            <person name="Rood J.I."/>
            <person name="Davies J.K."/>
            <person name="Adler B."/>
        </authorList>
    </citation>
    <scope>NUCLEOTIDE SEQUENCE [LARGE SCALE GENOMIC DNA]</scope>
    <source>
        <strain>JB197</strain>
    </source>
</reference>
<keyword id="KW-0032">Aminotransferase</keyword>
<keyword id="KW-0808">Transferase</keyword>
<organism>
    <name type="scientific">Leptospira borgpetersenii serovar Hardjo-bovis (strain JB197)</name>
    <dbReference type="NCBI Taxonomy" id="355277"/>
    <lineage>
        <taxon>Bacteria</taxon>
        <taxon>Pseudomonadati</taxon>
        <taxon>Spirochaetota</taxon>
        <taxon>Spirochaetia</taxon>
        <taxon>Leptospirales</taxon>
        <taxon>Leptospiraceae</taxon>
        <taxon>Leptospira</taxon>
    </lineage>
</organism>
<protein>
    <recommendedName>
        <fullName evidence="1">Aminomethyltransferase</fullName>
        <ecNumber evidence="1">2.1.2.10</ecNumber>
    </recommendedName>
    <alternativeName>
        <fullName evidence="1">Glycine cleavage system T protein</fullName>
    </alternativeName>
</protein>
<evidence type="ECO:0000255" key="1">
    <source>
        <dbReference type="HAMAP-Rule" id="MF_00259"/>
    </source>
</evidence>
<feature type="chain" id="PRO_1000047676" description="Aminomethyltransferase">
    <location>
        <begin position="1"/>
        <end position="371"/>
    </location>
</feature>
<accession>Q04PM9</accession>
<comment type="function">
    <text evidence="1">The glycine cleavage system catalyzes the degradation of glycine.</text>
</comment>
<comment type="catalytic activity">
    <reaction evidence="1">
        <text>N(6)-[(R)-S(8)-aminomethyldihydrolipoyl]-L-lysyl-[protein] + (6S)-5,6,7,8-tetrahydrofolate = N(6)-[(R)-dihydrolipoyl]-L-lysyl-[protein] + (6R)-5,10-methylene-5,6,7,8-tetrahydrofolate + NH4(+)</text>
        <dbReference type="Rhea" id="RHEA:16945"/>
        <dbReference type="Rhea" id="RHEA-COMP:10475"/>
        <dbReference type="Rhea" id="RHEA-COMP:10492"/>
        <dbReference type="ChEBI" id="CHEBI:15636"/>
        <dbReference type="ChEBI" id="CHEBI:28938"/>
        <dbReference type="ChEBI" id="CHEBI:57453"/>
        <dbReference type="ChEBI" id="CHEBI:83100"/>
        <dbReference type="ChEBI" id="CHEBI:83143"/>
        <dbReference type="EC" id="2.1.2.10"/>
    </reaction>
</comment>
<comment type="subunit">
    <text evidence="1">The glycine cleavage system is composed of four proteins: P, T, L and H.</text>
</comment>
<comment type="similarity">
    <text evidence="1">Belongs to the GcvT family.</text>
</comment>
<name>GCST_LEPBJ</name>
<sequence>MSQVKRTPLYETHRALGAKMIPFGGWDMPVQYSGIIAEHNATREAAGLFDVSHMGEIFITGEPKIVLDFLELVTCNSVASLSDFQVQYNAILNENGGLVDDVTIYKFSVEKYMICSNASNYETVTAHLLKYLPASGVKVSDQSPNWHQIALQGPKANEIFSKFLGRELDSIKYYHFALLDYQGEEIIVSRTGYTGEDGFEIYSSIPFGLKLWSGLSELGKPQGLLPCGLGARDTLRIEAKYPLYGHELNNQWTPIESGIGWIVKEKKNPYFSSGKILSQKKNGTEFKIVAFALTEAGVPRENFRVLDFQGNEIGKTTSGTFSPSLKKGIGLASIRTEKIKDGEPIQIEIREQPKQAIITTKPFIPGSIRKN</sequence>
<dbReference type="EC" id="2.1.2.10" evidence="1"/>
<dbReference type="EMBL" id="CP000350">
    <property type="protein sequence ID" value="ABJ77141.1"/>
    <property type="molecule type" value="Genomic_DNA"/>
</dbReference>
<dbReference type="RefSeq" id="WP_011672071.1">
    <property type="nucleotide sequence ID" value="NC_008510.1"/>
</dbReference>
<dbReference type="SMR" id="Q04PM9"/>
<dbReference type="KEGG" id="lbj:LBJ_2730"/>
<dbReference type="HOGENOM" id="CLU_007884_10_2_12"/>
<dbReference type="Proteomes" id="UP000000656">
    <property type="component" value="Chromosome 1"/>
</dbReference>
<dbReference type="GO" id="GO:0005829">
    <property type="term" value="C:cytosol"/>
    <property type="evidence" value="ECO:0007669"/>
    <property type="project" value="TreeGrafter"/>
</dbReference>
<dbReference type="GO" id="GO:0005960">
    <property type="term" value="C:glycine cleavage complex"/>
    <property type="evidence" value="ECO:0007669"/>
    <property type="project" value="InterPro"/>
</dbReference>
<dbReference type="GO" id="GO:0004047">
    <property type="term" value="F:aminomethyltransferase activity"/>
    <property type="evidence" value="ECO:0007669"/>
    <property type="project" value="UniProtKB-UniRule"/>
</dbReference>
<dbReference type="GO" id="GO:0008483">
    <property type="term" value="F:transaminase activity"/>
    <property type="evidence" value="ECO:0007669"/>
    <property type="project" value="UniProtKB-KW"/>
</dbReference>
<dbReference type="GO" id="GO:0019464">
    <property type="term" value="P:glycine decarboxylation via glycine cleavage system"/>
    <property type="evidence" value="ECO:0007669"/>
    <property type="project" value="UniProtKB-UniRule"/>
</dbReference>
<dbReference type="Gene3D" id="2.40.30.110">
    <property type="entry name" value="Aminomethyltransferase beta-barrel domains"/>
    <property type="match status" value="1"/>
</dbReference>
<dbReference type="Gene3D" id="3.30.70.1400">
    <property type="entry name" value="Aminomethyltransferase beta-barrel domains"/>
    <property type="match status" value="1"/>
</dbReference>
<dbReference type="Gene3D" id="4.10.1250.10">
    <property type="entry name" value="Aminomethyltransferase fragment"/>
    <property type="match status" value="1"/>
</dbReference>
<dbReference type="Gene3D" id="3.30.1360.120">
    <property type="entry name" value="Probable tRNA modification gtpase trme, domain 1"/>
    <property type="match status" value="1"/>
</dbReference>
<dbReference type="HAMAP" id="MF_00259">
    <property type="entry name" value="GcvT"/>
    <property type="match status" value="1"/>
</dbReference>
<dbReference type="InterPro" id="IPR006223">
    <property type="entry name" value="GCS_T"/>
</dbReference>
<dbReference type="InterPro" id="IPR022903">
    <property type="entry name" value="GCS_T_bac"/>
</dbReference>
<dbReference type="InterPro" id="IPR013977">
    <property type="entry name" value="GCST_C"/>
</dbReference>
<dbReference type="InterPro" id="IPR006222">
    <property type="entry name" value="GCV_T_N"/>
</dbReference>
<dbReference type="InterPro" id="IPR028896">
    <property type="entry name" value="GcvT/YgfZ/DmdA"/>
</dbReference>
<dbReference type="InterPro" id="IPR029043">
    <property type="entry name" value="GcvT/YgfZ_C"/>
</dbReference>
<dbReference type="InterPro" id="IPR027266">
    <property type="entry name" value="TrmE/GcvT_dom1"/>
</dbReference>
<dbReference type="NCBIfam" id="TIGR00528">
    <property type="entry name" value="gcvT"/>
    <property type="match status" value="1"/>
</dbReference>
<dbReference type="NCBIfam" id="NF001567">
    <property type="entry name" value="PRK00389.1"/>
    <property type="match status" value="1"/>
</dbReference>
<dbReference type="PANTHER" id="PTHR43757">
    <property type="entry name" value="AMINOMETHYLTRANSFERASE"/>
    <property type="match status" value="1"/>
</dbReference>
<dbReference type="PANTHER" id="PTHR43757:SF2">
    <property type="entry name" value="AMINOMETHYLTRANSFERASE, MITOCHONDRIAL"/>
    <property type="match status" value="1"/>
</dbReference>
<dbReference type="Pfam" id="PF01571">
    <property type="entry name" value="GCV_T"/>
    <property type="match status" value="1"/>
</dbReference>
<dbReference type="Pfam" id="PF08669">
    <property type="entry name" value="GCV_T_C"/>
    <property type="match status" value="1"/>
</dbReference>
<dbReference type="PIRSF" id="PIRSF006487">
    <property type="entry name" value="GcvT"/>
    <property type="match status" value="1"/>
</dbReference>
<dbReference type="SUPFAM" id="SSF101790">
    <property type="entry name" value="Aminomethyltransferase beta-barrel domain"/>
    <property type="match status" value="1"/>
</dbReference>
<dbReference type="SUPFAM" id="SSF103025">
    <property type="entry name" value="Folate-binding domain"/>
    <property type="match status" value="1"/>
</dbReference>